<comment type="similarity">
    <text evidence="1">Belongs to the snRNP Sm proteins family.</text>
</comment>
<feature type="chain" id="PRO_1000003429" description="Putative snRNP Sm-like protein">
    <location>
        <begin position="1"/>
        <end position="72"/>
    </location>
</feature>
<feature type="domain" description="Sm" evidence="2">
    <location>
        <begin position="4"/>
        <end position="72"/>
    </location>
</feature>
<proteinExistence type="inferred from homology"/>
<accession>Q465S1</accession>
<protein>
    <recommendedName>
        <fullName evidence="1">Putative snRNP Sm-like protein</fullName>
    </recommendedName>
</protein>
<reference key="1">
    <citation type="journal article" date="2006" name="J. Bacteriol.">
        <title>The Methanosarcina barkeri genome: comparative analysis with Methanosarcina acetivorans and Methanosarcina mazei reveals extensive rearrangement within methanosarcinal genomes.</title>
        <authorList>
            <person name="Maeder D.L."/>
            <person name="Anderson I."/>
            <person name="Brettin T.S."/>
            <person name="Bruce D.C."/>
            <person name="Gilna P."/>
            <person name="Han C.S."/>
            <person name="Lapidus A."/>
            <person name="Metcalf W.W."/>
            <person name="Saunders E."/>
            <person name="Tapia R."/>
            <person name="Sowers K.R."/>
        </authorList>
    </citation>
    <scope>NUCLEOTIDE SEQUENCE [LARGE SCALE GENOMIC DNA]</scope>
    <source>
        <strain>Fusaro / DSM 804</strain>
    </source>
</reference>
<sequence>MANRPLDILNNALDTPVIVRLKGAREFRGELKGYDIHMNLVLDNAEELREGEVVSKFGSVVIRGDNVVYVSP</sequence>
<dbReference type="EMBL" id="CP000099">
    <property type="protein sequence ID" value="AAZ72371.1"/>
    <property type="molecule type" value="Genomic_DNA"/>
</dbReference>
<dbReference type="SMR" id="Q465S1"/>
<dbReference type="STRING" id="269797.Mbar_A3500"/>
<dbReference type="PaxDb" id="269797-Mbar_A3500"/>
<dbReference type="KEGG" id="mba:Mbar_A3500"/>
<dbReference type="eggNOG" id="arCOG00998">
    <property type="taxonomic scope" value="Archaea"/>
</dbReference>
<dbReference type="HOGENOM" id="CLU_076902_11_1_2"/>
<dbReference type="OrthoDB" id="371816at2157"/>
<dbReference type="GO" id="GO:1990904">
    <property type="term" value="C:ribonucleoprotein complex"/>
    <property type="evidence" value="ECO:0007669"/>
    <property type="project" value="UniProtKB-KW"/>
</dbReference>
<dbReference type="GO" id="GO:0003723">
    <property type="term" value="F:RNA binding"/>
    <property type="evidence" value="ECO:0007669"/>
    <property type="project" value="InterPro"/>
</dbReference>
<dbReference type="CDD" id="cd01731">
    <property type="entry name" value="archaeal_Sm1"/>
    <property type="match status" value="1"/>
</dbReference>
<dbReference type="Gene3D" id="2.30.30.100">
    <property type="match status" value="1"/>
</dbReference>
<dbReference type="HAMAP" id="MF_00257">
    <property type="entry name" value="Lsm_RuxX"/>
    <property type="match status" value="1"/>
</dbReference>
<dbReference type="InterPro" id="IPR044641">
    <property type="entry name" value="Lsm7/SmG-like"/>
</dbReference>
<dbReference type="InterPro" id="IPR010920">
    <property type="entry name" value="LSM_dom_sf"/>
</dbReference>
<dbReference type="InterPro" id="IPR047575">
    <property type="entry name" value="Sm"/>
</dbReference>
<dbReference type="InterPro" id="IPR001163">
    <property type="entry name" value="Sm_dom_euk/arc"/>
</dbReference>
<dbReference type="InterPro" id="IPR022901">
    <property type="entry name" value="snRNP_Sm-like_arc"/>
</dbReference>
<dbReference type="NCBIfam" id="NF001963">
    <property type="entry name" value="PRK00737.1"/>
    <property type="match status" value="1"/>
</dbReference>
<dbReference type="PANTHER" id="PTHR10553">
    <property type="entry name" value="SMALL NUCLEAR RIBONUCLEOPROTEIN"/>
    <property type="match status" value="1"/>
</dbReference>
<dbReference type="PANTHER" id="PTHR10553:SF5">
    <property type="entry name" value="U6 SNRNA-ASSOCIATED SM-LIKE PROTEIN LSM7"/>
    <property type="match status" value="1"/>
</dbReference>
<dbReference type="Pfam" id="PF01423">
    <property type="entry name" value="LSM"/>
    <property type="match status" value="1"/>
</dbReference>
<dbReference type="PIRSF" id="PIRSF006609">
    <property type="entry name" value="snRNP_SmF"/>
    <property type="match status" value="1"/>
</dbReference>
<dbReference type="SMART" id="SM00651">
    <property type="entry name" value="Sm"/>
    <property type="match status" value="1"/>
</dbReference>
<dbReference type="SUPFAM" id="SSF50182">
    <property type="entry name" value="Sm-like ribonucleoproteins"/>
    <property type="match status" value="1"/>
</dbReference>
<dbReference type="PROSITE" id="PS52002">
    <property type="entry name" value="SM"/>
    <property type="match status" value="1"/>
</dbReference>
<gene>
    <name type="ordered locus">Mbar_A3500</name>
</gene>
<organism>
    <name type="scientific">Methanosarcina barkeri (strain Fusaro / DSM 804)</name>
    <dbReference type="NCBI Taxonomy" id="269797"/>
    <lineage>
        <taxon>Archaea</taxon>
        <taxon>Methanobacteriati</taxon>
        <taxon>Methanobacteriota</taxon>
        <taxon>Stenosarchaea group</taxon>
        <taxon>Methanomicrobia</taxon>
        <taxon>Methanosarcinales</taxon>
        <taxon>Methanosarcinaceae</taxon>
        <taxon>Methanosarcina</taxon>
    </lineage>
</organism>
<evidence type="ECO:0000255" key="1">
    <source>
        <dbReference type="HAMAP-Rule" id="MF_00257"/>
    </source>
</evidence>
<evidence type="ECO:0000255" key="2">
    <source>
        <dbReference type="PROSITE-ProRule" id="PRU01346"/>
    </source>
</evidence>
<keyword id="KW-0687">Ribonucleoprotein</keyword>
<name>RUXX_METBF</name>